<evidence type="ECO:0000255" key="1">
    <source>
        <dbReference type="PROSITE-ProRule" id="PRU00522"/>
    </source>
</evidence>
<evidence type="ECO:0000305" key="2"/>
<dbReference type="EC" id="1.3.1.-"/>
<dbReference type="EMBL" id="L77117">
    <property type="protein sequence ID" value="AAB98605.1"/>
    <property type="molecule type" value="Genomic_DNA"/>
</dbReference>
<dbReference type="PIR" id="D64376">
    <property type="entry name" value="D64376"/>
</dbReference>
<dbReference type="RefSeq" id="WP_010870117.1">
    <property type="nucleotide sequence ID" value="NC_000909.1"/>
</dbReference>
<dbReference type="SMR" id="Q58029"/>
<dbReference type="FunCoup" id="Q58029">
    <property type="interactions" value="101"/>
</dbReference>
<dbReference type="STRING" id="243232.MJ_0612"/>
<dbReference type="PaxDb" id="243232-MJ_0612"/>
<dbReference type="EnsemblBacteria" id="AAB98605">
    <property type="protein sequence ID" value="AAB98605"/>
    <property type="gene ID" value="MJ_0612"/>
</dbReference>
<dbReference type="GeneID" id="1451478"/>
<dbReference type="KEGG" id="mja:MJ_0612"/>
<dbReference type="eggNOG" id="arCOG00245">
    <property type="taxonomic scope" value="Archaea"/>
</dbReference>
<dbReference type="HOGENOM" id="CLU_036672_1_0_2"/>
<dbReference type="InParanoid" id="Q58029"/>
<dbReference type="OrthoDB" id="24743at2157"/>
<dbReference type="PhylomeDB" id="Q58029"/>
<dbReference type="Proteomes" id="UP000000805">
    <property type="component" value="Chromosome"/>
</dbReference>
<dbReference type="GO" id="GO:0070403">
    <property type="term" value="F:NAD+ binding"/>
    <property type="evidence" value="ECO:0000318"/>
    <property type="project" value="GO_Central"/>
</dbReference>
<dbReference type="GO" id="GO:0008977">
    <property type="term" value="F:prephenate dehydrogenase (NAD+) activity"/>
    <property type="evidence" value="ECO:0000318"/>
    <property type="project" value="GO_Central"/>
</dbReference>
<dbReference type="GO" id="GO:0004665">
    <property type="term" value="F:prephenate dehydrogenase (NADP+) activity"/>
    <property type="evidence" value="ECO:0007669"/>
    <property type="project" value="InterPro"/>
</dbReference>
<dbReference type="GO" id="GO:0006571">
    <property type="term" value="P:tyrosine biosynthetic process"/>
    <property type="evidence" value="ECO:0000318"/>
    <property type="project" value="GO_Central"/>
</dbReference>
<dbReference type="FunFam" id="1.10.3660.10:FF:000008">
    <property type="entry name" value="Prephenate dehydrogenase"/>
    <property type="match status" value="1"/>
</dbReference>
<dbReference type="FunFam" id="3.40.50.720:FF:001656">
    <property type="entry name" value="Probable arogenate/prephenate dehydrogenase"/>
    <property type="match status" value="1"/>
</dbReference>
<dbReference type="Gene3D" id="1.10.3660.10">
    <property type="entry name" value="6-phosphogluconate dehydrogenase C-terminal like domain"/>
    <property type="match status" value="1"/>
</dbReference>
<dbReference type="Gene3D" id="3.30.70.380">
    <property type="entry name" value="Ferrodoxin-fold anticodon-binding domain"/>
    <property type="match status" value="1"/>
</dbReference>
<dbReference type="Gene3D" id="3.40.50.720">
    <property type="entry name" value="NAD(P)-binding Rossmann-like Domain"/>
    <property type="match status" value="1"/>
</dbReference>
<dbReference type="InterPro" id="IPR008927">
    <property type="entry name" value="6-PGluconate_DH-like_C_sf"/>
</dbReference>
<dbReference type="InterPro" id="IPR005121">
    <property type="entry name" value="Fdx_antiC-bd"/>
</dbReference>
<dbReference type="InterPro" id="IPR036690">
    <property type="entry name" value="Fdx_antiC-bd_sf"/>
</dbReference>
<dbReference type="InterPro" id="IPR036291">
    <property type="entry name" value="NAD(P)-bd_dom_sf"/>
</dbReference>
<dbReference type="InterPro" id="IPR046825">
    <property type="entry name" value="PDH_C"/>
</dbReference>
<dbReference type="InterPro" id="IPR046826">
    <property type="entry name" value="PDH_N"/>
</dbReference>
<dbReference type="InterPro" id="IPR008299">
    <property type="entry name" value="Prep_DH/arog_DH"/>
</dbReference>
<dbReference type="InterPro" id="IPR050812">
    <property type="entry name" value="Preph/Arog_dehydrog"/>
</dbReference>
<dbReference type="InterPro" id="IPR003099">
    <property type="entry name" value="Prephen_DH"/>
</dbReference>
<dbReference type="NCBIfam" id="NF006408">
    <property type="entry name" value="PRK08655.1-2"/>
    <property type="match status" value="1"/>
</dbReference>
<dbReference type="NCBIfam" id="NF006410">
    <property type="entry name" value="PRK08655.1-4"/>
    <property type="match status" value="1"/>
</dbReference>
<dbReference type="PANTHER" id="PTHR21363">
    <property type="entry name" value="PREPHENATE DEHYDROGENASE"/>
    <property type="match status" value="1"/>
</dbReference>
<dbReference type="PANTHER" id="PTHR21363:SF0">
    <property type="entry name" value="PREPHENATE DEHYDROGENASE [NADP(+)]"/>
    <property type="match status" value="1"/>
</dbReference>
<dbReference type="Pfam" id="PF20463">
    <property type="entry name" value="PDH_C"/>
    <property type="match status" value="1"/>
</dbReference>
<dbReference type="Pfam" id="PF02153">
    <property type="entry name" value="PDH_N"/>
    <property type="match status" value="1"/>
</dbReference>
<dbReference type="PIRSF" id="PIRSF006549">
    <property type="entry name" value="PDH_arog_dh_reg"/>
    <property type="match status" value="1"/>
</dbReference>
<dbReference type="SMART" id="SM00896">
    <property type="entry name" value="FDX-ACB"/>
    <property type="match status" value="1"/>
</dbReference>
<dbReference type="SUPFAM" id="SSF48179">
    <property type="entry name" value="6-phosphogluconate dehydrogenase C-terminal domain-like"/>
    <property type="match status" value="1"/>
</dbReference>
<dbReference type="SUPFAM" id="SSF54991">
    <property type="entry name" value="Anticodon-binding domain of PheRS"/>
    <property type="match status" value="1"/>
</dbReference>
<dbReference type="SUPFAM" id="SSF51735">
    <property type="entry name" value="NAD(P)-binding Rossmann-fold domains"/>
    <property type="match status" value="1"/>
</dbReference>
<dbReference type="PROSITE" id="PS51176">
    <property type="entry name" value="PDH_ADH"/>
    <property type="match status" value="1"/>
</dbReference>
<sequence length="446" mass="50888">MKNTNLTISIIGGTDGLGKWFARYLKNKGFNVIVTGRDIEKGKNVEKELGVEFTNNNIEAAKKGDIVIVAVPINVTERVIKEVAPHVREGCLLMDITSIKEIPSKAMEEHVKEGVTVIPTHPMFGPSTPSLLRQVVILTPSEKHKNTEWFNKVYNFLKKEGAKVIVIPPEKHDRIMGIVQGLTHFAFISLGATLKELNVDIKESRKFASPIYELMISIIGRIIGQNPYLYADIQMFNPRIKEIHETFINQCKEISEIVKNKDREGFVKIMKEAAKHFGSEAKRGAYYSDKAVFALTSEIEKLNKLIGKDVAVKNINSNVVHFGVLKDIEDDYLILNKNGKEQKFNILRVEVFAGDELSKLKKKHLEKKYIDVSVLFKKDVDEEVILNLLKKMFDIEIIDVYEGEKIEEGYKSITFRIYGYNKDELKNIEKEFLKIIKNIGGKERFK</sequence>
<reference key="1">
    <citation type="journal article" date="1996" name="Science">
        <title>Complete genome sequence of the methanogenic archaeon, Methanococcus jannaschii.</title>
        <authorList>
            <person name="Bult C.J."/>
            <person name="White O."/>
            <person name="Olsen G.J."/>
            <person name="Zhou L."/>
            <person name="Fleischmann R.D."/>
            <person name="Sutton G.G."/>
            <person name="Blake J.A."/>
            <person name="FitzGerald L.M."/>
            <person name="Clayton R.A."/>
            <person name="Gocayne J.D."/>
            <person name="Kerlavage A.R."/>
            <person name="Dougherty B.A."/>
            <person name="Tomb J.-F."/>
            <person name="Adams M.D."/>
            <person name="Reich C.I."/>
            <person name="Overbeek R."/>
            <person name="Kirkness E.F."/>
            <person name="Weinstock K.G."/>
            <person name="Merrick J.M."/>
            <person name="Glodek A."/>
            <person name="Scott J.L."/>
            <person name="Geoghagen N.S.M."/>
            <person name="Weidman J.F."/>
            <person name="Fuhrmann J.L."/>
            <person name="Nguyen D."/>
            <person name="Utterback T.R."/>
            <person name="Kelley J.M."/>
            <person name="Peterson J.D."/>
            <person name="Sadow P.W."/>
            <person name="Hanna M.C."/>
            <person name="Cotton M.D."/>
            <person name="Roberts K.M."/>
            <person name="Hurst M.A."/>
            <person name="Kaine B.P."/>
            <person name="Borodovsky M."/>
            <person name="Klenk H.-P."/>
            <person name="Fraser C.M."/>
            <person name="Smith H.O."/>
            <person name="Woese C.R."/>
            <person name="Venter J.C."/>
        </authorList>
    </citation>
    <scope>NUCLEOTIDE SEQUENCE [LARGE SCALE GENOMIC DNA]</scope>
    <source>
        <strain>ATCC 43067 / DSM 2661 / JAL-1 / JCM 10045 / NBRC 100440</strain>
    </source>
</reference>
<proteinExistence type="inferred from homology"/>
<accession>Q58029</accession>
<comment type="similarity">
    <text evidence="2">In the N-terminal section; belongs to the prephenate/arogenate dehydrogenase family.</text>
</comment>
<name>Y612_METJA</name>
<protein>
    <recommendedName>
        <fullName>Probable arogenate/prephenate dehydrogenase</fullName>
        <ecNumber>1.3.1.-</ecNumber>
    </recommendedName>
</protein>
<feature type="chain" id="PRO_0000119199" description="Probable arogenate/prephenate dehydrogenase">
    <location>
        <begin position="1"/>
        <end position="446"/>
    </location>
</feature>
<feature type="domain" description="Prephenate/arogenate dehydrogenase" evidence="1">
    <location>
        <begin position="6"/>
        <end position="288"/>
    </location>
</feature>
<organism>
    <name type="scientific">Methanocaldococcus jannaschii (strain ATCC 43067 / DSM 2661 / JAL-1 / JCM 10045 / NBRC 100440)</name>
    <name type="common">Methanococcus jannaschii</name>
    <dbReference type="NCBI Taxonomy" id="243232"/>
    <lineage>
        <taxon>Archaea</taxon>
        <taxon>Methanobacteriati</taxon>
        <taxon>Methanobacteriota</taxon>
        <taxon>Methanomada group</taxon>
        <taxon>Methanococci</taxon>
        <taxon>Methanococcales</taxon>
        <taxon>Methanocaldococcaceae</taxon>
        <taxon>Methanocaldococcus</taxon>
    </lineage>
</organism>
<keyword id="KW-0521">NADP</keyword>
<keyword id="KW-0560">Oxidoreductase</keyword>
<keyword id="KW-1185">Reference proteome</keyword>
<gene>
    <name type="ordered locus">MJ0612</name>
</gene>